<dbReference type="EC" id="7.1.1.2"/>
<dbReference type="EMBL" id="L06178">
    <property type="protein sequence ID" value="AAB96805.1"/>
    <property type="molecule type" value="Genomic_DNA"/>
</dbReference>
<dbReference type="RefSeq" id="NP_008089.1">
    <property type="nucleotide sequence ID" value="NC_001566.1"/>
</dbReference>
<dbReference type="SMR" id="P34855"/>
<dbReference type="GeneID" id="807698"/>
<dbReference type="CTD" id="4540"/>
<dbReference type="GO" id="GO:0005743">
    <property type="term" value="C:mitochondrial inner membrane"/>
    <property type="evidence" value="ECO:0007669"/>
    <property type="project" value="UniProtKB-SubCell"/>
</dbReference>
<dbReference type="GO" id="GO:0008137">
    <property type="term" value="F:NADH dehydrogenase (ubiquinone) activity"/>
    <property type="evidence" value="ECO:0007669"/>
    <property type="project" value="UniProtKB-EC"/>
</dbReference>
<dbReference type="GO" id="GO:0042773">
    <property type="term" value="P:ATP synthesis coupled electron transport"/>
    <property type="evidence" value="ECO:0007669"/>
    <property type="project" value="InterPro"/>
</dbReference>
<dbReference type="GO" id="GO:0015990">
    <property type="term" value="P:electron transport coupled proton transport"/>
    <property type="evidence" value="ECO:0007669"/>
    <property type="project" value="TreeGrafter"/>
</dbReference>
<dbReference type="InterPro" id="IPR001750">
    <property type="entry name" value="ND/Mrp_TM"/>
</dbReference>
<dbReference type="InterPro" id="IPR003945">
    <property type="entry name" value="NU5C-like"/>
</dbReference>
<dbReference type="PANTHER" id="PTHR42829">
    <property type="entry name" value="NADH-UBIQUINONE OXIDOREDUCTASE CHAIN 5"/>
    <property type="match status" value="1"/>
</dbReference>
<dbReference type="PANTHER" id="PTHR42829:SF2">
    <property type="entry name" value="NADH-UBIQUINONE OXIDOREDUCTASE CHAIN 5"/>
    <property type="match status" value="1"/>
</dbReference>
<dbReference type="Pfam" id="PF00361">
    <property type="entry name" value="Proton_antipo_M"/>
    <property type="match status" value="1"/>
</dbReference>
<dbReference type="PRINTS" id="PR01434">
    <property type="entry name" value="NADHDHGNASE5"/>
</dbReference>
<comment type="function">
    <text evidence="1">Core subunit of the mitochondrial membrane respiratory chain NADH dehydrogenase (Complex I) that is believed to belong to the minimal assembly required for catalysis. Complex I functions in the transfer of electrons from NADH to the respiratory chain. The immediate electron acceptor for the enzyme is believed to be ubiquinone (By similarity).</text>
</comment>
<comment type="catalytic activity">
    <reaction>
        <text>a ubiquinone + NADH + 5 H(+)(in) = a ubiquinol + NAD(+) + 4 H(+)(out)</text>
        <dbReference type="Rhea" id="RHEA:29091"/>
        <dbReference type="Rhea" id="RHEA-COMP:9565"/>
        <dbReference type="Rhea" id="RHEA-COMP:9566"/>
        <dbReference type="ChEBI" id="CHEBI:15378"/>
        <dbReference type="ChEBI" id="CHEBI:16389"/>
        <dbReference type="ChEBI" id="CHEBI:17976"/>
        <dbReference type="ChEBI" id="CHEBI:57540"/>
        <dbReference type="ChEBI" id="CHEBI:57945"/>
        <dbReference type="EC" id="7.1.1.2"/>
    </reaction>
</comment>
<comment type="subcellular location">
    <subcellularLocation>
        <location evidence="1">Mitochondrion inner membrane</location>
        <topology evidence="1">Multi-pass membrane protein</topology>
    </subcellularLocation>
</comment>
<comment type="similarity">
    <text evidence="3">Belongs to the complex I subunit 5 family.</text>
</comment>
<reference key="1">
    <citation type="journal article" date="1993" name="Genetics">
        <title>The mitochondrial genome of the honeybee Apis mellifera: complete sequence and genome organization.</title>
        <authorList>
            <person name="Crozier R.H."/>
            <person name="Crozier Y.C."/>
        </authorList>
    </citation>
    <scope>NUCLEOTIDE SEQUENCE [GENOMIC DNA]</scope>
    <source>
        <tissue>Thorax</tissue>
    </source>
</reference>
<gene>
    <name type="primary">ND5</name>
</gene>
<geneLocation type="mitochondrion"/>
<evidence type="ECO:0000250" key="1"/>
<evidence type="ECO:0000255" key="2"/>
<evidence type="ECO:0000305" key="3"/>
<proteinExistence type="inferred from homology"/>
<feature type="chain" id="PRO_0000118058" description="NADH-ubiquinone oxidoreductase chain 5">
    <location>
        <begin position="1"/>
        <end position="554"/>
    </location>
</feature>
<feature type="transmembrane region" description="Helical" evidence="2">
    <location>
        <begin position="6"/>
        <end position="26"/>
    </location>
</feature>
<feature type="transmembrane region" description="Helical" evidence="2">
    <location>
        <begin position="57"/>
        <end position="77"/>
    </location>
</feature>
<feature type="transmembrane region" description="Helical" evidence="2">
    <location>
        <begin position="93"/>
        <end position="113"/>
    </location>
</feature>
<feature type="transmembrane region" description="Helical" evidence="2">
    <location>
        <begin position="150"/>
        <end position="170"/>
    </location>
</feature>
<feature type="transmembrane region" description="Helical" evidence="2">
    <location>
        <begin position="175"/>
        <end position="197"/>
    </location>
</feature>
<feature type="transmembrane region" description="Helical" evidence="2">
    <location>
        <begin position="209"/>
        <end position="228"/>
    </location>
</feature>
<feature type="transmembrane region" description="Helical" evidence="2">
    <location>
        <begin position="238"/>
        <end position="258"/>
    </location>
</feature>
<feature type="transmembrane region" description="Helical" evidence="2">
    <location>
        <begin position="263"/>
        <end position="283"/>
    </location>
</feature>
<feature type="transmembrane region" description="Helical" evidence="2">
    <location>
        <begin position="286"/>
        <end position="306"/>
    </location>
</feature>
<feature type="transmembrane region" description="Helical" evidence="2">
    <location>
        <begin position="332"/>
        <end position="352"/>
    </location>
</feature>
<feature type="transmembrane region" description="Helical" evidence="2">
    <location>
        <begin position="379"/>
        <end position="399"/>
    </location>
</feature>
<feature type="transmembrane region" description="Helical" evidence="2">
    <location>
        <begin position="409"/>
        <end position="429"/>
    </location>
</feature>
<feature type="transmembrane region" description="Helical" evidence="2">
    <location>
        <begin position="441"/>
        <end position="461"/>
    </location>
</feature>
<feature type="transmembrane region" description="Helical" evidence="2">
    <location>
        <begin position="480"/>
        <end position="500"/>
    </location>
</feature>
<feature type="transmembrane region" description="Helical" evidence="2">
    <location>
        <begin position="532"/>
        <end position="552"/>
    </location>
</feature>
<organism>
    <name type="scientific">Apis mellifera ligustica</name>
    <name type="common">Common honeybee</name>
    <name type="synonym">Italian honeybee</name>
    <dbReference type="NCBI Taxonomy" id="7469"/>
    <lineage>
        <taxon>Eukaryota</taxon>
        <taxon>Metazoa</taxon>
        <taxon>Ecdysozoa</taxon>
        <taxon>Arthropoda</taxon>
        <taxon>Hexapoda</taxon>
        <taxon>Insecta</taxon>
        <taxon>Pterygota</taxon>
        <taxon>Neoptera</taxon>
        <taxon>Endopterygota</taxon>
        <taxon>Hymenoptera</taxon>
        <taxon>Apocrita</taxon>
        <taxon>Aculeata</taxon>
        <taxon>Apoidea</taxon>
        <taxon>Anthophila</taxon>
        <taxon>Apidae</taxon>
        <taxon>Apis</taxon>
    </lineage>
</organism>
<accession>P34855</accession>
<protein>
    <recommendedName>
        <fullName>NADH-ubiquinone oxidoreductase chain 5</fullName>
        <ecNumber>7.1.1.2</ecNumber>
    </recommendedName>
    <alternativeName>
        <fullName>NADH dehydrogenase subunit 5</fullName>
    </alternativeName>
</protein>
<keyword id="KW-0249">Electron transport</keyword>
<keyword id="KW-0472">Membrane</keyword>
<keyword id="KW-0496">Mitochondrion</keyword>
<keyword id="KW-0999">Mitochondrion inner membrane</keyword>
<keyword id="KW-0520">NAD</keyword>
<keyword id="KW-0679">Respiratory chain</keyword>
<keyword id="KW-1278">Translocase</keyword>
<keyword id="KW-0812">Transmembrane</keyword>
<keyword id="KW-1133">Transmembrane helix</keyword>
<keyword id="KW-0813">Transport</keyword>
<keyword id="KW-0830">Ubiquinone</keyword>
<sequence>MIKMMVCGILLFEFSFLMMLMSLYLLYLNKEFFFEWNIYTFNSMKFNFLLLIDYKSLMFIFLVSMIFSMIIIYSISYMDLSELKMDRFLYLMILFLISMYMLILSPNMLSIILGWDGLGLISYCLVIYYMKMKSFTSGMVTILLNRLGDIGLLLIMGLMTYYGSWNLSFYKMNEFMMIYILLMAFTKSAQIPFSTWLPMAMMAPTPVSSLVHSSTLVTAGIYLLIRYVNLLDFNYKNYIMLIASLTMLFAGLVANFELDLKKVVAYSTLSQLGFMMSMLSIGSTELVFLHLFIHAMFKSLMFMCVGSYMHYMYSNQDIRMYYGMYYIYPMKSMILIFSILSLCGFPFLVGYYSKDLIIEMFFFSKMIYFSMINLIIGTIFTVSYSFRMILVLTSKFLMMNVIYSKEDKIMCISMMMMMIFSLIYSKLIFNLMNFNLLGINLLMIYKLMVFKMIMVGLIMGFNFYKLILLNNKIGYFKMSFLFMNLIYKIIYKKIIMMMFTYEVYIEKSIIEILSSKFMSVTLNIYELKISNLMINIYLTILIYLIYLLIYLINF</sequence>
<name>NU5M_APILI</name>